<proteinExistence type="inferred from homology"/>
<dbReference type="EC" id="2.7.2.8" evidence="1"/>
<dbReference type="EMBL" id="X86157">
    <property type="protein sequence ID" value="CAA60098.1"/>
    <property type="molecule type" value="Genomic_DNA"/>
</dbReference>
<dbReference type="EMBL" id="AF049897">
    <property type="protein sequence ID" value="AAC24814.1"/>
    <property type="molecule type" value="Genomic_DNA"/>
</dbReference>
<dbReference type="EMBL" id="BA000036">
    <property type="protein sequence ID" value="BAB98789.1"/>
    <property type="molecule type" value="Genomic_DNA"/>
</dbReference>
<dbReference type="EMBL" id="BX927152">
    <property type="protein sequence ID" value="CAF21407.1"/>
    <property type="status" value="ALT_INIT"/>
    <property type="molecule type" value="Genomic_DNA"/>
</dbReference>
<dbReference type="RefSeq" id="NP_600615.1">
    <property type="nucleotide sequence ID" value="NC_003450.3"/>
</dbReference>
<dbReference type="SMR" id="Q59281"/>
<dbReference type="STRING" id="196627.cg1582"/>
<dbReference type="KEGG" id="cgb:cg1582"/>
<dbReference type="KEGG" id="cgl:Cgl1396"/>
<dbReference type="PATRIC" id="fig|196627.13.peg.1365"/>
<dbReference type="eggNOG" id="COG0548">
    <property type="taxonomic scope" value="Bacteria"/>
</dbReference>
<dbReference type="HOGENOM" id="CLU_053680_0_1_11"/>
<dbReference type="OrthoDB" id="9803155at2"/>
<dbReference type="BioCyc" id="CORYNE:G18NG-10975-MONOMER"/>
<dbReference type="BRENDA" id="2.7.2.8">
    <property type="organism ID" value="960"/>
</dbReference>
<dbReference type="UniPathway" id="UPA00068">
    <property type="reaction ID" value="UER00107"/>
</dbReference>
<dbReference type="Proteomes" id="UP000000582">
    <property type="component" value="Chromosome"/>
</dbReference>
<dbReference type="Proteomes" id="UP000001009">
    <property type="component" value="Chromosome"/>
</dbReference>
<dbReference type="GO" id="GO:0005737">
    <property type="term" value="C:cytoplasm"/>
    <property type="evidence" value="ECO:0007669"/>
    <property type="project" value="UniProtKB-SubCell"/>
</dbReference>
<dbReference type="GO" id="GO:0003991">
    <property type="term" value="F:acetylglutamate kinase activity"/>
    <property type="evidence" value="ECO:0007669"/>
    <property type="project" value="UniProtKB-UniRule"/>
</dbReference>
<dbReference type="GO" id="GO:0005524">
    <property type="term" value="F:ATP binding"/>
    <property type="evidence" value="ECO:0007669"/>
    <property type="project" value="UniProtKB-UniRule"/>
</dbReference>
<dbReference type="GO" id="GO:0042450">
    <property type="term" value="P:arginine biosynthetic process via ornithine"/>
    <property type="evidence" value="ECO:0007669"/>
    <property type="project" value="UniProtKB-UniRule"/>
</dbReference>
<dbReference type="GO" id="GO:0006526">
    <property type="term" value="P:L-arginine biosynthetic process"/>
    <property type="evidence" value="ECO:0007669"/>
    <property type="project" value="UniProtKB-UniPathway"/>
</dbReference>
<dbReference type="CDD" id="cd04250">
    <property type="entry name" value="AAK_NAGK-C"/>
    <property type="match status" value="1"/>
</dbReference>
<dbReference type="FunFam" id="3.40.1160.10:FF:000004">
    <property type="entry name" value="Acetylglutamate kinase"/>
    <property type="match status" value="1"/>
</dbReference>
<dbReference type="Gene3D" id="3.40.1160.10">
    <property type="entry name" value="Acetylglutamate kinase-like"/>
    <property type="match status" value="1"/>
</dbReference>
<dbReference type="HAMAP" id="MF_00082">
    <property type="entry name" value="ArgB"/>
    <property type="match status" value="1"/>
</dbReference>
<dbReference type="InterPro" id="IPR036393">
    <property type="entry name" value="AceGlu_kinase-like_sf"/>
</dbReference>
<dbReference type="InterPro" id="IPR004662">
    <property type="entry name" value="AcgluKinase_fam"/>
</dbReference>
<dbReference type="InterPro" id="IPR037528">
    <property type="entry name" value="ArgB"/>
</dbReference>
<dbReference type="InterPro" id="IPR001048">
    <property type="entry name" value="Asp/Glu/Uridylate_kinase"/>
</dbReference>
<dbReference type="InterPro" id="IPR001057">
    <property type="entry name" value="Glu/AcGlu_kinase"/>
</dbReference>
<dbReference type="InterPro" id="IPR041727">
    <property type="entry name" value="NAGK-C"/>
</dbReference>
<dbReference type="NCBIfam" id="TIGR00761">
    <property type="entry name" value="argB"/>
    <property type="match status" value="1"/>
</dbReference>
<dbReference type="PANTHER" id="PTHR23342">
    <property type="entry name" value="N-ACETYLGLUTAMATE SYNTHASE"/>
    <property type="match status" value="1"/>
</dbReference>
<dbReference type="PANTHER" id="PTHR23342:SF0">
    <property type="entry name" value="N-ACETYLGLUTAMATE SYNTHASE, MITOCHONDRIAL"/>
    <property type="match status" value="1"/>
</dbReference>
<dbReference type="Pfam" id="PF00696">
    <property type="entry name" value="AA_kinase"/>
    <property type="match status" value="1"/>
</dbReference>
<dbReference type="PIRSF" id="PIRSF000728">
    <property type="entry name" value="NAGK"/>
    <property type="match status" value="1"/>
</dbReference>
<dbReference type="PRINTS" id="PR00474">
    <property type="entry name" value="GLU5KINASE"/>
</dbReference>
<dbReference type="SUPFAM" id="SSF53633">
    <property type="entry name" value="Carbamate kinase-like"/>
    <property type="match status" value="1"/>
</dbReference>
<sequence>MQHFRDKIVVVKYGGNAMVDDDLKAAFAADMVFLRTVGAKPVVVHGGGPQISEMLNRVGLQGEFKGGFRVTTPEVMDIVRMVLFGQVGRDLVGLINSHGPYAVGTSGEDAGLFTAQKRMVNIDGVPTDIGLVGDIINVDASSLMDIIEAGRIPVVSTIAPGEDGQIYNINADTAAGALAAAIGAERLLVLTNVEGLYTDWPDKSSLVSKIKATELEAILPGLDSGMIPKMESCLNAVRGGVSAAHVIDGRIAHSVLLELLTMGGIGTMVLPDVFDRENYPEGTVFRKDDKDGEL</sequence>
<evidence type="ECO:0000255" key="1">
    <source>
        <dbReference type="HAMAP-Rule" id="MF_00082"/>
    </source>
</evidence>
<evidence type="ECO:0000305" key="2"/>
<gene>
    <name evidence="1" type="primary">argB</name>
    <name type="ordered locus">Cgl1396</name>
    <name type="ordered locus">cg1582</name>
</gene>
<keyword id="KW-0028">Amino-acid biosynthesis</keyword>
<keyword id="KW-0055">Arginine biosynthesis</keyword>
<keyword id="KW-0067">ATP-binding</keyword>
<keyword id="KW-0963">Cytoplasm</keyword>
<keyword id="KW-0418">Kinase</keyword>
<keyword id="KW-0547">Nucleotide-binding</keyword>
<keyword id="KW-1185">Reference proteome</keyword>
<keyword id="KW-0808">Transferase</keyword>
<protein>
    <recommendedName>
        <fullName evidence="1">Acetylglutamate kinase</fullName>
        <ecNumber evidence="1">2.7.2.8</ecNumber>
    </recommendedName>
    <alternativeName>
        <fullName evidence="1">N-acetyl-L-glutamate 5-phosphotransferase</fullName>
    </alternativeName>
    <alternativeName>
        <fullName evidence="1">NAG kinase</fullName>
        <shortName evidence="1">NAGK</shortName>
    </alternativeName>
</protein>
<name>ARGB_CORGL</name>
<organism>
    <name type="scientific">Corynebacterium glutamicum (strain ATCC 13032 / DSM 20300 / JCM 1318 / BCRC 11384 / CCUG 27702 / LMG 3730 / NBRC 12168 / NCIMB 10025 / NRRL B-2784 / 534)</name>
    <dbReference type="NCBI Taxonomy" id="196627"/>
    <lineage>
        <taxon>Bacteria</taxon>
        <taxon>Bacillati</taxon>
        <taxon>Actinomycetota</taxon>
        <taxon>Actinomycetes</taxon>
        <taxon>Mycobacteriales</taxon>
        <taxon>Corynebacteriaceae</taxon>
        <taxon>Corynebacterium</taxon>
    </lineage>
</organism>
<comment type="function">
    <text evidence="1">Catalyzes the ATP-dependent phosphorylation of N-acetyl-L-glutamate.</text>
</comment>
<comment type="catalytic activity">
    <reaction evidence="1">
        <text>N-acetyl-L-glutamate + ATP = N-acetyl-L-glutamyl 5-phosphate + ADP</text>
        <dbReference type="Rhea" id="RHEA:14629"/>
        <dbReference type="ChEBI" id="CHEBI:30616"/>
        <dbReference type="ChEBI" id="CHEBI:44337"/>
        <dbReference type="ChEBI" id="CHEBI:57936"/>
        <dbReference type="ChEBI" id="CHEBI:456216"/>
        <dbReference type="EC" id="2.7.2.8"/>
    </reaction>
</comment>
<comment type="pathway">
    <text evidence="1">Amino-acid biosynthesis; L-arginine biosynthesis; N(2)-acetyl-L-ornithine from L-glutamate: step 2/4.</text>
</comment>
<comment type="subcellular location">
    <subcellularLocation>
        <location evidence="1">Cytoplasm</location>
    </subcellularLocation>
</comment>
<comment type="similarity">
    <text evidence="1">Belongs to the acetylglutamate kinase family. ArgB subfamily.</text>
</comment>
<comment type="sequence caution" evidence="2">
    <conflict type="erroneous initiation">
        <sequence resource="EMBL-CDS" id="CAF21407"/>
    </conflict>
</comment>
<accession>Q59281</accession>
<reference key="1">
    <citation type="journal article" date="1996" name="Microbiology">
        <title>Genes and enzymes of the acetyl cycle of arginine biosynthesis in Corynebacterium glutamicum: enzyme evolution in the early steps of the arginine pathway.</title>
        <authorList>
            <person name="Sakanyan V."/>
            <person name="Petrosyan P."/>
            <person name="Lecocq M."/>
            <person name="Boyen A."/>
            <person name="Legrain C."/>
            <person name="Demarez M.N."/>
            <person name="Hallet J.-N."/>
            <person name="Glansdorff N."/>
        </authorList>
    </citation>
    <scope>NUCLEOTIDE SEQUENCE [GENOMIC DNA]</scope>
    <source>
        <strain>ATCC 13032 / DSM 20300 / JCM 1318 / BCRC 11384 / CCUG 27702 / LMG 3730 / NBRC 12168 / NCIMB 10025 / NRRL B-2784 / 534</strain>
    </source>
</reference>
<reference key="2">
    <citation type="submission" date="1998-02" db="EMBL/GenBank/DDBJ databases">
        <title>Molecular cloning of the arginine biosynthetic genes from Corynebacterium glutamicum.</title>
        <authorList>
            <person name="Park M.Y."/>
            <person name="Chun J.Y."/>
            <person name="Ko S.-Y."/>
            <person name="Lee M.-S."/>
        </authorList>
    </citation>
    <scope>NUCLEOTIDE SEQUENCE [GENOMIC DNA]</scope>
    <source>
        <strain>ATCC 13059 / LMG 3658 / NCIB 10332 / AS019 / 613</strain>
    </source>
</reference>
<reference key="3">
    <citation type="journal article" date="2003" name="Appl. Microbiol. Biotechnol.">
        <title>The Corynebacterium glutamicum genome: features and impacts on biotechnological processes.</title>
        <authorList>
            <person name="Ikeda M."/>
            <person name="Nakagawa S."/>
        </authorList>
    </citation>
    <scope>NUCLEOTIDE SEQUENCE [LARGE SCALE GENOMIC DNA]</scope>
    <source>
        <strain>ATCC 13032 / DSM 20300 / JCM 1318 / BCRC 11384 / CCUG 27702 / LMG 3730 / NBRC 12168 / NCIMB 10025 / NRRL B-2784 / 534</strain>
    </source>
</reference>
<reference key="4">
    <citation type="journal article" date="2003" name="J. Biotechnol.">
        <title>The complete Corynebacterium glutamicum ATCC 13032 genome sequence and its impact on the production of L-aspartate-derived amino acids and vitamins.</title>
        <authorList>
            <person name="Kalinowski J."/>
            <person name="Bathe B."/>
            <person name="Bartels D."/>
            <person name="Bischoff N."/>
            <person name="Bott M."/>
            <person name="Burkovski A."/>
            <person name="Dusch N."/>
            <person name="Eggeling L."/>
            <person name="Eikmanns B.J."/>
            <person name="Gaigalat L."/>
            <person name="Goesmann A."/>
            <person name="Hartmann M."/>
            <person name="Huthmacher K."/>
            <person name="Kraemer R."/>
            <person name="Linke B."/>
            <person name="McHardy A.C."/>
            <person name="Meyer F."/>
            <person name="Moeckel B."/>
            <person name="Pfefferle W."/>
            <person name="Puehler A."/>
            <person name="Rey D.A."/>
            <person name="Rueckert C."/>
            <person name="Rupp O."/>
            <person name="Sahm H."/>
            <person name="Wendisch V.F."/>
            <person name="Wiegraebe I."/>
            <person name="Tauch A."/>
        </authorList>
    </citation>
    <scope>NUCLEOTIDE SEQUENCE [LARGE SCALE GENOMIC DNA]</scope>
    <source>
        <strain>ATCC 13032 / DSM 20300 / JCM 1318 / BCRC 11384 / CCUG 27702 / LMG 3730 / NBRC 12168 / NCIMB 10025 / NRRL B-2784 / 534</strain>
    </source>
</reference>
<feature type="chain" id="PRO_0000112610" description="Acetylglutamate kinase">
    <location>
        <begin position="1"/>
        <end position="294"/>
    </location>
</feature>
<feature type="binding site" evidence="1">
    <location>
        <begin position="47"/>
        <end position="48"/>
    </location>
    <ligand>
        <name>substrate</name>
    </ligand>
</feature>
<feature type="binding site" evidence="1">
    <location>
        <position position="69"/>
    </location>
    <ligand>
        <name>substrate</name>
    </ligand>
</feature>
<feature type="binding site" evidence="1">
    <location>
        <position position="168"/>
    </location>
    <ligand>
        <name>substrate</name>
    </ligand>
</feature>
<feature type="site" description="Transition state stabilizer" evidence="1">
    <location>
        <position position="12"/>
    </location>
</feature>
<feature type="site" description="Transition state stabilizer" evidence="1">
    <location>
        <position position="229"/>
    </location>
</feature>